<keyword id="KW-1003">Cell membrane</keyword>
<keyword id="KW-0238">DNA-binding</keyword>
<keyword id="KW-0413">Isomerase</keyword>
<keyword id="KW-0472">Membrane</keyword>
<keyword id="KW-0799">Topoisomerase</keyword>
<gene>
    <name evidence="1" type="primary">parC</name>
    <name type="ordered locus">MW1242</name>
</gene>
<organism>
    <name type="scientific">Staphylococcus aureus (strain MW2)</name>
    <dbReference type="NCBI Taxonomy" id="196620"/>
    <lineage>
        <taxon>Bacteria</taxon>
        <taxon>Bacillati</taxon>
        <taxon>Bacillota</taxon>
        <taxon>Bacilli</taxon>
        <taxon>Bacillales</taxon>
        <taxon>Staphylococcaceae</taxon>
        <taxon>Staphylococcus</taxon>
    </lineage>
</organism>
<feature type="chain" id="PRO_0000145415" description="DNA topoisomerase 4 subunit A">
    <location>
        <begin position="1"/>
        <end position="800"/>
    </location>
</feature>
<feature type="domain" description="Topo IIA-type catalytic" evidence="2">
    <location>
        <begin position="31"/>
        <end position="495"/>
    </location>
</feature>
<feature type="active site" description="O-(5'-phospho-DNA)-tyrosine intermediate" evidence="1">
    <location>
        <position position="119"/>
    </location>
</feature>
<feature type="site" description="Interaction with DNA" evidence="1">
    <location>
        <position position="39"/>
    </location>
</feature>
<feature type="site" description="Interaction with DNA" evidence="1">
    <location>
        <position position="75"/>
    </location>
</feature>
<feature type="site" description="Interaction with DNA" evidence="1">
    <location>
        <position position="77"/>
    </location>
</feature>
<feature type="site" description="Interaction with DNA" evidence="1">
    <location>
        <position position="88"/>
    </location>
</feature>
<feature type="site" description="Interaction with DNA" evidence="1">
    <location>
        <position position="94"/>
    </location>
</feature>
<feature type="site" description="Transition state stabilizer" evidence="1">
    <location>
        <position position="118"/>
    </location>
</feature>
<dbReference type="EC" id="5.6.2.2" evidence="1"/>
<dbReference type="EMBL" id="BA000033">
    <property type="protein sequence ID" value="BAB95107.1"/>
    <property type="molecule type" value="Genomic_DNA"/>
</dbReference>
<dbReference type="RefSeq" id="WP_001289561.1">
    <property type="nucleotide sequence ID" value="NC_003923.1"/>
</dbReference>
<dbReference type="SMR" id="Q8NWU8"/>
<dbReference type="KEGG" id="sam:MW1242"/>
<dbReference type="HOGENOM" id="CLU_002977_6_1_9"/>
<dbReference type="GO" id="GO:0005694">
    <property type="term" value="C:chromosome"/>
    <property type="evidence" value="ECO:0007669"/>
    <property type="project" value="InterPro"/>
</dbReference>
<dbReference type="GO" id="GO:0005737">
    <property type="term" value="C:cytoplasm"/>
    <property type="evidence" value="ECO:0007669"/>
    <property type="project" value="TreeGrafter"/>
</dbReference>
<dbReference type="GO" id="GO:0009330">
    <property type="term" value="C:DNA topoisomerase type II (double strand cut, ATP-hydrolyzing) complex"/>
    <property type="evidence" value="ECO:0007669"/>
    <property type="project" value="TreeGrafter"/>
</dbReference>
<dbReference type="GO" id="GO:0019897">
    <property type="term" value="C:extrinsic component of plasma membrane"/>
    <property type="evidence" value="ECO:0007669"/>
    <property type="project" value="UniProtKB-UniRule"/>
</dbReference>
<dbReference type="GO" id="GO:0005524">
    <property type="term" value="F:ATP binding"/>
    <property type="evidence" value="ECO:0007669"/>
    <property type="project" value="InterPro"/>
</dbReference>
<dbReference type="GO" id="GO:0003677">
    <property type="term" value="F:DNA binding"/>
    <property type="evidence" value="ECO:0007669"/>
    <property type="project" value="UniProtKB-UniRule"/>
</dbReference>
<dbReference type="GO" id="GO:0034335">
    <property type="term" value="F:DNA negative supercoiling activity"/>
    <property type="evidence" value="ECO:0007669"/>
    <property type="project" value="UniProtKB-ARBA"/>
</dbReference>
<dbReference type="GO" id="GO:0007059">
    <property type="term" value="P:chromosome segregation"/>
    <property type="evidence" value="ECO:0007669"/>
    <property type="project" value="UniProtKB-UniRule"/>
</dbReference>
<dbReference type="GO" id="GO:0006265">
    <property type="term" value="P:DNA topological change"/>
    <property type="evidence" value="ECO:0007669"/>
    <property type="project" value="UniProtKB-UniRule"/>
</dbReference>
<dbReference type="CDD" id="cd00187">
    <property type="entry name" value="TOP4c"/>
    <property type="match status" value="1"/>
</dbReference>
<dbReference type="FunFam" id="1.10.268.10:FF:000001">
    <property type="entry name" value="DNA gyrase subunit A"/>
    <property type="match status" value="1"/>
</dbReference>
<dbReference type="FunFam" id="3.30.1360.40:FF:000002">
    <property type="entry name" value="DNA gyrase subunit A"/>
    <property type="match status" value="1"/>
</dbReference>
<dbReference type="FunFam" id="3.90.199.10:FF:000001">
    <property type="entry name" value="DNA gyrase subunit A"/>
    <property type="match status" value="1"/>
</dbReference>
<dbReference type="FunFam" id="2.120.10.90:FF:000005">
    <property type="entry name" value="DNA topoisomerase 4 subunit A"/>
    <property type="match status" value="1"/>
</dbReference>
<dbReference type="Gene3D" id="3.30.1360.40">
    <property type="match status" value="1"/>
</dbReference>
<dbReference type="Gene3D" id="2.120.10.90">
    <property type="entry name" value="DNA gyrase/topoisomerase IV, subunit A, C-terminal"/>
    <property type="match status" value="1"/>
</dbReference>
<dbReference type="Gene3D" id="3.90.199.10">
    <property type="entry name" value="Topoisomerase II, domain 5"/>
    <property type="match status" value="1"/>
</dbReference>
<dbReference type="Gene3D" id="1.10.268.10">
    <property type="entry name" value="Topoisomerase, domain 3"/>
    <property type="match status" value="1"/>
</dbReference>
<dbReference type="HAMAP" id="MF_00937">
    <property type="entry name" value="ParC_type2"/>
    <property type="match status" value="1"/>
</dbReference>
<dbReference type="InterPro" id="IPR006691">
    <property type="entry name" value="GyrA/parC_rep"/>
</dbReference>
<dbReference type="InterPro" id="IPR035516">
    <property type="entry name" value="Gyrase/topoIV_suA_C"/>
</dbReference>
<dbReference type="InterPro" id="IPR013760">
    <property type="entry name" value="Topo_IIA-like_dom_sf"/>
</dbReference>
<dbReference type="InterPro" id="IPR013758">
    <property type="entry name" value="Topo_IIA_A/C_ab"/>
</dbReference>
<dbReference type="InterPro" id="IPR013757">
    <property type="entry name" value="Topo_IIA_A_a_sf"/>
</dbReference>
<dbReference type="InterPro" id="IPR002205">
    <property type="entry name" value="Topo_IIA_dom_A"/>
</dbReference>
<dbReference type="InterPro" id="IPR005741">
    <property type="entry name" value="TopoIV_A_Gpos"/>
</dbReference>
<dbReference type="InterPro" id="IPR050220">
    <property type="entry name" value="Type_II_DNA_Topoisomerases"/>
</dbReference>
<dbReference type="NCBIfam" id="TIGR01061">
    <property type="entry name" value="parC_Gpos"/>
    <property type="match status" value="1"/>
</dbReference>
<dbReference type="NCBIfam" id="NF004044">
    <property type="entry name" value="PRK05561.1"/>
    <property type="match status" value="1"/>
</dbReference>
<dbReference type="PANTHER" id="PTHR43493">
    <property type="entry name" value="DNA GYRASE/TOPOISOMERASE SUBUNIT A"/>
    <property type="match status" value="1"/>
</dbReference>
<dbReference type="PANTHER" id="PTHR43493:SF9">
    <property type="entry name" value="DNA TOPOISOMERASE 4 SUBUNIT A"/>
    <property type="match status" value="1"/>
</dbReference>
<dbReference type="Pfam" id="PF03989">
    <property type="entry name" value="DNA_gyraseA_C"/>
    <property type="match status" value="5"/>
</dbReference>
<dbReference type="Pfam" id="PF00521">
    <property type="entry name" value="DNA_topoisoIV"/>
    <property type="match status" value="1"/>
</dbReference>
<dbReference type="SMART" id="SM00434">
    <property type="entry name" value="TOP4c"/>
    <property type="match status" value="1"/>
</dbReference>
<dbReference type="SUPFAM" id="SSF101904">
    <property type="entry name" value="GyrA/ParC C-terminal domain-like"/>
    <property type="match status" value="1"/>
</dbReference>
<dbReference type="SUPFAM" id="SSF56719">
    <property type="entry name" value="Type II DNA topoisomerase"/>
    <property type="match status" value="1"/>
</dbReference>
<dbReference type="PROSITE" id="PS52040">
    <property type="entry name" value="TOPO_IIA"/>
    <property type="match status" value="1"/>
</dbReference>
<sequence>MSEIIQDLSLEDVLGDRFGRYSKYIIQERALPDVRDGLKPVQRRILYAMYSSGNTHDKNFRKSAKTVGDVIGQYHPHGDSSVYEAMVRLSQDWKLRHVLIEMHGNNGSIDNDPPAAMRYTEAKLSLLAEELLRDINKETVSFIPNYDDTTLEPMVLPSRFPNLLVNGSTGISAGYATDIPPHNLAEVIQATLKYIDNPDITVNQLMKYIKGPDFPTGGIIQGIDGIKKAYESGKGRIIVRSKVEEETLRNGRKQLIITEIPYEVNKSSLVKRIDELRADKKVDGIVEVRDETDRTGLRIAIELKKDVNSESIKNYLYKNSDLQISYNFNMVAISDGRPKLMGIRQIIDSYLNHQIEVVANRTKFELDNAEKRMHIVEGLIKALSILDKVIELIRSSKNKCDAKENLIEVYEFTEEQAEAIVMLQLYRLTNTDIVALEGEHKELEALIKQLRHILDNHDALLNVIKEELNEIKKKFKSERLSLIEAEIEEIKIDKEVMVPSEEVILSMTRHGYIKRTSIRSFNASGVEDIGLKDGDSLLKHQEVNTQDTVLVFTNKGRYLFIPVHKLADIRWKELGQHVSQIVPIEEDEVVINVFNEKDFNTDAFYVFATQNGMIKKSTVPLFKTTRFNKPLIATKVKENDDLISVMRFEKDQLITVITNKGMSLTYNTSELSDTGLRAAGVKSINLKAEDFVVMTEGVSENDTILMATQRGSLKRISFKILQVAKRAQRGITLLKELKKNPHRIVAAHVVTGEHSQYTLYSKSNEEHGLINDIHKSEQYTNGSFIVDTDDFGEVIDMYIS</sequence>
<comment type="function">
    <text evidence="1">Topoisomerase IV is essential for chromosome segregation. It relaxes supercoiled DNA. Performs the decatenation events required during the replication of a circular DNA molecule.</text>
</comment>
<comment type="catalytic activity">
    <reaction evidence="1">
        <text>ATP-dependent breakage, passage and rejoining of double-stranded DNA.</text>
        <dbReference type="EC" id="5.6.2.2"/>
    </reaction>
</comment>
<comment type="subunit">
    <text evidence="1">Heterotetramer composed of ParC and ParE.</text>
</comment>
<comment type="subcellular location">
    <subcellularLocation>
        <location evidence="1">Cell membrane</location>
        <topology evidence="1">Peripheral membrane protein</topology>
    </subcellularLocation>
</comment>
<comment type="similarity">
    <text evidence="1">Belongs to the type II topoisomerase GyrA/ParC subunit family. ParC type 2 subfamily.</text>
</comment>
<reference key="1">
    <citation type="journal article" date="2002" name="Lancet">
        <title>Genome and virulence determinants of high virulence community-acquired MRSA.</title>
        <authorList>
            <person name="Baba T."/>
            <person name="Takeuchi F."/>
            <person name="Kuroda M."/>
            <person name="Yuzawa H."/>
            <person name="Aoki K."/>
            <person name="Oguchi A."/>
            <person name="Nagai Y."/>
            <person name="Iwama N."/>
            <person name="Asano K."/>
            <person name="Naimi T."/>
            <person name="Kuroda H."/>
            <person name="Cui L."/>
            <person name="Yamamoto K."/>
            <person name="Hiramatsu K."/>
        </authorList>
    </citation>
    <scope>NUCLEOTIDE SEQUENCE [LARGE SCALE GENOMIC DNA]</scope>
    <source>
        <strain>MW2</strain>
    </source>
</reference>
<proteinExistence type="inferred from homology"/>
<protein>
    <recommendedName>
        <fullName evidence="1">DNA topoisomerase 4 subunit A</fullName>
        <ecNumber evidence="1">5.6.2.2</ecNumber>
    </recommendedName>
    <alternativeName>
        <fullName evidence="1">Topoisomerase IV subunit A</fullName>
    </alternativeName>
</protein>
<accession>Q8NWU8</accession>
<name>PARC_STAAW</name>
<evidence type="ECO:0000255" key="1">
    <source>
        <dbReference type="HAMAP-Rule" id="MF_00937"/>
    </source>
</evidence>
<evidence type="ECO:0000255" key="2">
    <source>
        <dbReference type="PROSITE-ProRule" id="PRU01384"/>
    </source>
</evidence>